<dbReference type="EMBL" id="AY280631">
    <property type="protein sequence ID" value="AAQ62068.1"/>
    <property type="molecule type" value="mRNA"/>
</dbReference>
<dbReference type="EMBL" id="BT062712">
    <property type="protein sequence ID" value="ACN27409.1"/>
    <property type="molecule type" value="mRNA"/>
</dbReference>
<dbReference type="EMBL" id="AF461815">
    <property type="protein sequence ID" value="AAL73044.1"/>
    <property type="molecule type" value="mRNA"/>
</dbReference>
<dbReference type="RefSeq" id="NP_001105227.2">
    <property type="nucleotide sequence ID" value="NM_001111757.2"/>
</dbReference>
<dbReference type="SMR" id="Q8W119"/>
<dbReference type="FunCoup" id="Q8W119">
    <property type="interactions" value="1225"/>
</dbReference>
<dbReference type="STRING" id="4577.Q8W119"/>
<dbReference type="PaxDb" id="4577-GRMZM2G108424_P02"/>
<dbReference type="EnsemblPlants" id="Zm00001eb155280_T001">
    <property type="protein sequence ID" value="Zm00001eb155280_P001"/>
    <property type="gene ID" value="Zm00001eb155280"/>
</dbReference>
<dbReference type="GeneID" id="542125"/>
<dbReference type="Gramene" id="Zm00001eb155280_T001">
    <property type="protein sequence ID" value="Zm00001eb155280_P001"/>
    <property type="gene ID" value="Zm00001eb155280"/>
</dbReference>
<dbReference type="KEGG" id="zma:542125"/>
<dbReference type="eggNOG" id="ENOG502QTN3">
    <property type="taxonomic scope" value="Eukaryota"/>
</dbReference>
<dbReference type="HOGENOM" id="CLU_047477_1_0_1"/>
<dbReference type="InParanoid" id="Q8W119"/>
<dbReference type="OMA" id="QCCRDEV"/>
<dbReference type="OrthoDB" id="608866at2759"/>
<dbReference type="Proteomes" id="UP000007305">
    <property type="component" value="Chromosome 3"/>
</dbReference>
<dbReference type="ExpressionAtlas" id="Q8W119">
    <property type="expression patterns" value="baseline and differential"/>
</dbReference>
<dbReference type="GO" id="GO:0000785">
    <property type="term" value="C:chromatin"/>
    <property type="evidence" value="ECO:0000250"/>
    <property type="project" value="UniProtKB"/>
</dbReference>
<dbReference type="GO" id="GO:0000781">
    <property type="term" value="C:chromosome, telomeric region"/>
    <property type="evidence" value="ECO:0007669"/>
    <property type="project" value="UniProtKB-SubCell"/>
</dbReference>
<dbReference type="GO" id="GO:0005730">
    <property type="term" value="C:nucleolus"/>
    <property type="evidence" value="ECO:0000250"/>
    <property type="project" value="UniProtKB"/>
</dbReference>
<dbReference type="GO" id="GO:0000786">
    <property type="term" value="C:nucleosome"/>
    <property type="evidence" value="ECO:0007669"/>
    <property type="project" value="InterPro"/>
</dbReference>
<dbReference type="GO" id="GO:0005634">
    <property type="term" value="C:nucleus"/>
    <property type="evidence" value="ECO:0000250"/>
    <property type="project" value="UniProtKB"/>
</dbReference>
<dbReference type="GO" id="GO:0003691">
    <property type="term" value="F:double-stranded telomeric DNA binding"/>
    <property type="evidence" value="ECO:0000250"/>
    <property type="project" value="UniProtKB"/>
</dbReference>
<dbReference type="GO" id="GO:0042803">
    <property type="term" value="F:protein homodimerization activity"/>
    <property type="evidence" value="ECO:0000250"/>
    <property type="project" value="UniProtKB"/>
</dbReference>
<dbReference type="GO" id="GO:0043047">
    <property type="term" value="F:single-stranded telomeric DNA binding"/>
    <property type="evidence" value="ECO:0000250"/>
    <property type="project" value="UniProtKB"/>
</dbReference>
<dbReference type="GO" id="GO:0006334">
    <property type="term" value="P:nucleosome assembly"/>
    <property type="evidence" value="ECO:0007669"/>
    <property type="project" value="InterPro"/>
</dbReference>
<dbReference type="CDD" id="cd11660">
    <property type="entry name" value="SANT_TRF"/>
    <property type="match status" value="1"/>
</dbReference>
<dbReference type="FunFam" id="1.10.10.10:FF:000620">
    <property type="entry name" value="Homeodomain-like/winged-helix DNA-binding family protein"/>
    <property type="match status" value="1"/>
</dbReference>
<dbReference type="FunFam" id="1.10.10.60:FF:000168">
    <property type="entry name" value="Telomere repeat-binding factor 1"/>
    <property type="match status" value="1"/>
</dbReference>
<dbReference type="Gene3D" id="1.10.10.60">
    <property type="entry name" value="Homeodomain-like"/>
    <property type="match status" value="1"/>
</dbReference>
<dbReference type="Gene3D" id="1.10.10.10">
    <property type="entry name" value="Winged helix-like DNA-binding domain superfamily/Winged helix DNA-binding domain"/>
    <property type="match status" value="1"/>
</dbReference>
<dbReference type="InterPro" id="IPR005818">
    <property type="entry name" value="Histone_H1/H5_H15"/>
</dbReference>
<dbReference type="InterPro" id="IPR009057">
    <property type="entry name" value="Homeodomain-like_sf"/>
</dbReference>
<dbReference type="InterPro" id="IPR017930">
    <property type="entry name" value="Myb_dom"/>
</dbReference>
<dbReference type="InterPro" id="IPR001005">
    <property type="entry name" value="SANT/Myb"/>
</dbReference>
<dbReference type="InterPro" id="IPR044597">
    <property type="entry name" value="SMH1-6"/>
</dbReference>
<dbReference type="InterPro" id="IPR036388">
    <property type="entry name" value="WH-like_DNA-bd_sf"/>
</dbReference>
<dbReference type="InterPro" id="IPR036390">
    <property type="entry name" value="WH_DNA-bd_sf"/>
</dbReference>
<dbReference type="PANTHER" id="PTHR46267">
    <property type="entry name" value="SINGLE MYB HISTONE 4"/>
    <property type="match status" value="1"/>
</dbReference>
<dbReference type="PANTHER" id="PTHR46267:SF15">
    <property type="entry name" value="WINGED HELIX-TURN-HELIX TRANSCRIPTION REPRESSOR DNA-BINDING PROTEIN-RELATED"/>
    <property type="match status" value="1"/>
</dbReference>
<dbReference type="Pfam" id="PF00538">
    <property type="entry name" value="Linker_histone"/>
    <property type="match status" value="1"/>
</dbReference>
<dbReference type="Pfam" id="PF00249">
    <property type="entry name" value="Myb_DNA-binding"/>
    <property type="match status" value="1"/>
</dbReference>
<dbReference type="SMART" id="SM00526">
    <property type="entry name" value="H15"/>
    <property type="match status" value="1"/>
</dbReference>
<dbReference type="SMART" id="SM00717">
    <property type="entry name" value="SANT"/>
    <property type="match status" value="1"/>
</dbReference>
<dbReference type="SUPFAM" id="SSF46689">
    <property type="entry name" value="Homeodomain-like"/>
    <property type="match status" value="1"/>
</dbReference>
<dbReference type="SUPFAM" id="SSF46785">
    <property type="entry name" value="Winged helix' DNA-binding domain"/>
    <property type="match status" value="1"/>
</dbReference>
<dbReference type="PROSITE" id="PS51504">
    <property type="entry name" value="H15"/>
    <property type="match status" value="1"/>
</dbReference>
<dbReference type="PROSITE" id="PS51294">
    <property type="entry name" value="HTH_MYB"/>
    <property type="match status" value="1"/>
</dbReference>
<keyword id="KW-0158">Chromosome</keyword>
<keyword id="KW-0175">Coiled coil</keyword>
<keyword id="KW-0238">DNA-binding</keyword>
<keyword id="KW-0539">Nucleus</keyword>
<keyword id="KW-1185">Reference proteome</keyword>
<keyword id="KW-0779">Telomere</keyword>
<keyword id="KW-0804">Transcription</keyword>
<keyword id="KW-0805">Transcription regulation</keyword>
<accession>Q8W119</accession>
<accession>Q6WLH2</accession>
<proteinExistence type="evidence at transcript level"/>
<reference key="1">
    <citation type="journal article" date="2003" name="Plant Physiol.">
        <title>The maize Single myb histone 1 gene, Smh1, belongs to a novel gene family and encodes a protein that binds telomere DNA repeats in vitro.</title>
        <authorList>
            <person name="Marian C.O."/>
            <person name="Bordoli S.J."/>
            <person name="Goltz M."/>
            <person name="Santarella R.A."/>
            <person name="Jackson L.P."/>
            <person name="Danilevskaya O."/>
            <person name="Beckstette M."/>
            <person name="Meeley R."/>
            <person name="Bass H.W."/>
        </authorList>
    </citation>
    <scope>NUCLEOTIDE SEQUENCE [MRNA]</scope>
    <scope>GENE FAMILY</scope>
    <scope>NOMENCLATURE</scope>
    <source>
        <strain>cv. W23</strain>
    </source>
</reference>
<reference key="2">
    <citation type="journal article" date="2009" name="PLoS Genet.">
        <title>Sequencing, mapping, and analysis of 27,455 maize full-length cDNAs.</title>
        <authorList>
            <person name="Soderlund C."/>
            <person name="Descour A."/>
            <person name="Kudrna D."/>
            <person name="Bomhoff M."/>
            <person name="Boyd L."/>
            <person name="Currie J."/>
            <person name="Angelova A."/>
            <person name="Collura K."/>
            <person name="Wissotski M."/>
            <person name="Ashley E."/>
            <person name="Morrow D."/>
            <person name="Fernandes J."/>
            <person name="Walbot V."/>
            <person name="Yu Y."/>
        </authorList>
    </citation>
    <scope>NUCLEOTIDE SEQUENCE [LARGE SCALE MRNA]</scope>
    <source>
        <strain>cv. B73</strain>
    </source>
</reference>
<reference key="3">
    <citation type="submission" date="2001-12" db="EMBL/GenBank/DDBJ databases">
        <authorList>
            <person name="Springer N.M."/>
            <person name="Schmitt L.T."/>
            <person name="Guthrie E."/>
            <person name="Sidorenko L."/>
            <person name="Selinger D."/>
            <person name="Kaeppler H.F."/>
            <person name="Kaeppler S.M."/>
        </authorList>
    </citation>
    <scope>NUCLEOTIDE SEQUENCE [LARGE SCALE MRNA]</scope>
    <source>
        <strain>cv. B73</strain>
    </source>
</reference>
<organism>
    <name type="scientific">Zea mays</name>
    <name type="common">Maize</name>
    <dbReference type="NCBI Taxonomy" id="4577"/>
    <lineage>
        <taxon>Eukaryota</taxon>
        <taxon>Viridiplantae</taxon>
        <taxon>Streptophyta</taxon>
        <taxon>Embryophyta</taxon>
        <taxon>Tracheophyta</taxon>
        <taxon>Spermatophyta</taxon>
        <taxon>Magnoliopsida</taxon>
        <taxon>Liliopsida</taxon>
        <taxon>Poales</taxon>
        <taxon>Poaceae</taxon>
        <taxon>PACMAD clade</taxon>
        <taxon>Panicoideae</taxon>
        <taxon>Andropogonodae</taxon>
        <taxon>Andropogoneae</taxon>
        <taxon>Tripsacinae</taxon>
        <taxon>Zea</taxon>
    </lineage>
</organism>
<protein>
    <recommendedName>
        <fullName>Single myb histone 4</fullName>
    </recommendedName>
    <alternativeName>
        <fullName>Protein SINGLE MYB HISTONE4</fullName>
    </alternativeName>
</protein>
<name>SMH4_MAIZE</name>
<sequence>MGAPKQKWTSEEEDALRAGVRKHGAGKWRTIQKDPEFSPVLSSRSNIDLKDKWRNLSFSASGLGSSKLRVPKITGPSSSPSSSSQPLLLPAANKFTEATLPADAEKKPQDGKTLPKYGAMIMEALLELNEPNGSDIAAIFGFIEQRYAVQPTFRRFLASKLRRLADSNKIEKIDKSYRLPDSLATRTPAPMNASAPKQKDPSKPSKVSKAIGLFSASSPALEAAMAAAVKVADAEAKAHDAHDQTMEAERIFKMAEDTESLLIIAAEIYDRCSRGEITTLVPVAQREI</sequence>
<feature type="chain" id="PRO_0000429016" description="Single myb histone 4">
    <location>
        <begin position="1"/>
        <end position="288"/>
    </location>
</feature>
<feature type="domain" description="HTH myb-type" evidence="3">
    <location>
        <begin position="1"/>
        <end position="60"/>
    </location>
</feature>
<feature type="domain" description="H15" evidence="4">
    <location>
        <begin position="113"/>
        <end position="181"/>
    </location>
</feature>
<feature type="DNA-binding region" description="H-T-H motif" evidence="3">
    <location>
        <begin position="28"/>
        <end position="56"/>
    </location>
</feature>
<feature type="region of interest" description="Disordered" evidence="5">
    <location>
        <begin position="1"/>
        <end position="42"/>
    </location>
</feature>
<feature type="region of interest" description="Disordered" evidence="5">
    <location>
        <begin position="62"/>
        <end position="87"/>
    </location>
</feature>
<feature type="region of interest" description="Disordered" evidence="5">
    <location>
        <begin position="181"/>
        <end position="206"/>
    </location>
</feature>
<feature type="coiled-coil region" evidence="2">
    <location>
        <begin position="230"/>
        <end position="250"/>
    </location>
</feature>
<feature type="compositionally biased region" description="Low complexity" evidence="5">
    <location>
        <begin position="76"/>
        <end position="87"/>
    </location>
</feature>
<feature type="sequence conflict" description="In Ref. 1; AAQ62068." evidence="6" ref="1">
    <original>L</original>
    <variation>I</variation>
    <location>
        <position position="179"/>
    </location>
</feature>
<evidence type="ECO:0000250" key="1"/>
<evidence type="ECO:0000255" key="2"/>
<evidence type="ECO:0000255" key="3">
    <source>
        <dbReference type="PROSITE-ProRule" id="PRU00625"/>
    </source>
</evidence>
<evidence type="ECO:0000255" key="4">
    <source>
        <dbReference type="PROSITE-ProRule" id="PRU00837"/>
    </source>
</evidence>
<evidence type="ECO:0000256" key="5">
    <source>
        <dbReference type="SAM" id="MobiDB-lite"/>
    </source>
</evidence>
<evidence type="ECO:0000305" key="6"/>
<gene>
    <name type="primary">SMH4</name>
    <name type="synonym">HON108</name>
</gene>
<comment type="function">
    <text evidence="1">Binds preferentially double-stranded telomeric repeats, but may also bind to the single telomeric strand.</text>
</comment>
<comment type="subunit">
    <text evidence="1">Forms a homodimer and heterodimers.</text>
</comment>
<comment type="subcellular location">
    <subcellularLocation>
        <location evidence="3 4">Nucleus</location>
    </subcellularLocation>
    <subcellularLocation>
        <location evidence="4">Chromosome</location>
    </subcellularLocation>
    <subcellularLocation>
        <location evidence="1">Nucleus</location>
        <location evidence="1">Nucleolus</location>
    </subcellularLocation>
    <subcellularLocation>
        <location evidence="6">Chromosome</location>
        <location evidence="6">Telomere</location>
    </subcellularLocation>
    <text evidence="1">Localized to the nucleolus during interphase.</text>
</comment>
<comment type="domain">
    <text evidence="1">HTH myb-type domain confers double-stranded telomeric DNA-binding while the H15 domain is involved in non-specific DNA-protein interaction and multimerization.</text>
</comment>
<comment type="similarity">
    <text evidence="4">Belongs to the histone H1/H5 family. SMH subfamily.</text>
</comment>